<evidence type="ECO:0000256" key="1">
    <source>
        <dbReference type="SAM" id="MobiDB-lite"/>
    </source>
</evidence>
<evidence type="ECO:0000269" key="2">
    <source>
    </source>
</evidence>
<evidence type="ECO:0000305" key="3"/>
<gene>
    <name type="primary">Lrrc10</name>
    <name type="synonym">Hrlrrp</name>
</gene>
<dbReference type="EMBL" id="AF527781">
    <property type="protein sequence ID" value="AAM89260.1"/>
    <property type="molecule type" value="mRNA"/>
</dbReference>
<dbReference type="EMBL" id="AB091100">
    <property type="protein sequence ID" value="BAC57985.1"/>
    <property type="molecule type" value="mRNA"/>
</dbReference>
<dbReference type="EMBL" id="AK084466">
    <property type="protein sequence ID" value="BAC39192.1"/>
    <property type="molecule type" value="mRNA"/>
</dbReference>
<dbReference type="EMBL" id="AK085779">
    <property type="protein sequence ID" value="BAC39536.1"/>
    <property type="molecule type" value="mRNA"/>
</dbReference>
<dbReference type="EMBL" id="BC086911">
    <property type="protein sequence ID" value="AAH86911.1"/>
    <property type="molecule type" value="mRNA"/>
</dbReference>
<dbReference type="CCDS" id="CCDS24189.1"/>
<dbReference type="RefSeq" id="NP_666354.1">
    <property type="nucleotide sequence ID" value="NM_146242.2"/>
</dbReference>
<dbReference type="SMR" id="Q8K3W2"/>
<dbReference type="FunCoup" id="Q8K3W2">
    <property type="interactions" value="518"/>
</dbReference>
<dbReference type="IntAct" id="Q8K3W2">
    <property type="interactions" value="2"/>
</dbReference>
<dbReference type="STRING" id="10090.ENSMUSP00000073502"/>
<dbReference type="TCDB" id="8.A.43.1.44">
    <property type="family name" value="the neat-domain containing methaemoglobin heme sequestration (n-mhs) family"/>
</dbReference>
<dbReference type="iPTMnet" id="Q8K3W2"/>
<dbReference type="PhosphoSitePlus" id="Q8K3W2"/>
<dbReference type="PaxDb" id="10090-ENSMUSP00000073502"/>
<dbReference type="ProteomicsDB" id="290148"/>
<dbReference type="Antibodypedia" id="44319">
    <property type="antibodies" value="45 antibodies from 12 providers"/>
</dbReference>
<dbReference type="DNASU" id="237560"/>
<dbReference type="Ensembl" id="ENSMUST00000073834.5">
    <property type="protein sequence ID" value="ENSMUSP00000073502.5"/>
    <property type="gene ID" value="ENSMUSG00000060187.5"/>
</dbReference>
<dbReference type="GeneID" id="237560"/>
<dbReference type="KEGG" id="mmu:237560"/>
<dbReference type="UCSC" id="uc007hcr.1">
    <property type="organism name" value="mouse"/>
</dbReference>
<dbReference type="AGR" id="MGI:2448063"/>
<dbReference type="CTD" id="376132"/>
<dbReference type="MGI" id="MGI:2448063">
    <property type="gene designation" value="Lrrc10"/>
</dbReference>
<dbReference type="VEuPathDB" id="HostDB:ENSMUSG00000060187"/>
<dbReference type="eggNOG" id="KOG0619">
    <property type="taxonomic scope" value="Eukaryota"/>
</dbReference>
<dbReference type="GeneTree" id="ENSGT00940000155040"/>
<dbReference type="HOGENOM" id="CLU_000288_18_15_1"/>
<dbReference type="InParanoid" id="Q8K3W2"/>
<dbReference type="OMA" id="LWIESNC"/>
<dbReference type="OrthoDB" id="40118at2759"/>
<dbReference type="PhylomeDB" id="Q8K3W2"/>
<dbReference type="TreeFam" id="TF332853"/>
<dbReference type="BioGRID-ORCS" id="237560">
    <property type="hits" value="1 hit in 76 CRISPR screens"/>
</dbReference>
<dbReference type="PRO" id="PR:Q8K3W2"/>
<dbReference type="Proteomes" id="UP000000589">
    <property type="component" value="Chromosome 10"/>
</dbReference>
<dbReference type="RNAct" id="Q8K3W2">
    <property type="molecule type" value="protein"/>
</dbReference>
<dbReference type="Bgee" id="ENSMUSG00000060187">
    <property type="expression patterns" value="Expressed in heart and 16 other cell types or tissues"/>
</dbReference>
<dbReference type="GO" id="GO:0005856">
    <property type="term" value="C:cytoskeleton"/>
    <property type="evidence" value="ECO:0000314"/>
    <property type="project" value="MGI"/>
</dbReference>
<dbReference type="GO" id="GO:0005739">
    <property type="term" value="C:mitochondrion"/>
    <property type="evidence" value="ECO:0000314"/>
    <property type="project" value="MGI"/>
</dbReference>
<dbReference type="GO" id="GO:0030016">
    <property type="term" value="C:myofibril"/>
    <property type="evidence" value="ECO:0000314"/>
    <property type="project" value="MGI"/>
</dbReference>
<dbReference type="GO" id="GO:0005634">
    <property type="term" value="C:nucleus"/>
    <property type="evidence" value="ECO:0000314"/>
    <property type="project" value="MGI"/>
</dbReference>
<dbReference type="GO" id="GO:0030017">
    <property type="term" value="C:sarcomere"/>
    <property type="evidence" value="ECO:0000314"/>
    <property type="project" value="MGI"/>
</dbReference>
<dbReference type="GO" id="GO:0003779">
    <property type="term" value="F:actin binding"/>
    <property type="evidence" value="ECO:0000314"/>
    <property type="project" value="MGI"/>
</dbReference>
<dbReference type="GO" id="GO:0051393">
    <property type="term" value="F:alpha-actinin binding"/>
    <property type="evidence" value="ECO:0000314"/>
    <property type="project" value="MGI"/>
</dbReference>
<dbReference type="GO" id="GO:0055013">
    <property type="term" value="P:cardiac muscle cell development"/>
    <property type="evidence" value="ECO:0000315"/>
    <property type="project" value="MGI"/>
</dbReference>
<dbReference type="FunFam" id="3.80.10.10:FF:002815">
    <property type="entry name" value="Leucine-rich repeat-containing protein 10"/>
    <property type="match status" value="1"/>
</dbReference>
<dbReference type="Gene3D" id="3.80.10.10">
    <property type="entry name" value="Ribonuclease Inhibitor"/>
    <property type="match status" value="1"/>
</dbReference>
<dbReference type="InterPro" id="IPR001611">
    <property type="entry name" value="Leu-rich_rpt"/>
</dbReference>
<dbReference type="InterPro" id="IPR003591">
    <property type="entry name" value="Leu-rich_rpt_typical-subtyp"/>
</dbReference>
<dbReference type="InterPro" id="IPR032675">
    <property type="entry name" value="LRR_dom_sf"/>
</dbReference>
<dbReference type="InterPro" id="IPR050216">
    <property type="entry name" value="LRR_domain-containing"/>
</dbReference>
<dbReference type="PANTHER" id="PTHR48051">
    <property type="match status" value="1"/>
</dbReference>
<dbReference type="PANTHER" id="PTHR48051:SF51">
    <property type="entry name" value="LEUCINE-RICH REPEAT-CONTAINING PROTEIN 10B"/>
    <property type="match status" value="1"/>
</dbReference>
<dbReference type="Pfam" id="PF13855">
    <property type="entry name" value="LRR_8"/>
    <property type="match status" value="1"/>
</dbReference>
<dbReference type="SMART" id="SM00364">
    <property type="entry name" value="LRR_BAC"/>
    <property type="match status" value="5"/>
</dbReference>
<dbReference type="SMART" id="SM00369">
    <property type="entry name" value="LRR_TYP"/>
    <property type="match status" value="5"/>
</dbReference>
<dbReference type="SUPFAM" id="SSF52058">
    <property type="entry name" value="L domain-like"/>
    <property type="match status" value="1"/>
</dbReference>
<dbReference type="PROSITE" id="PS51450">
    <property type="entry name" value="LRR"/>
    <property type="match status" value="7"/>
</dbReference>
<proteinExistence type="evidence at protein level"/>
<sequence>MGNTIRAFVAFIPTDRCQSYVVGDLREMPLDRMVDLSGSQLRRFPLHVCSFTELVKLYLSDNHLHSLPPDLAQLQNLQILALDFNNFKALPRVVCTLKQLCILYLGNNKLCDLPDELSLLQNLRTLWLESNCLTRLPDVVCELSLLKTLHAGSNALRLLPGQLRRLRELRTIWLSGNQLADFPSVLLRMPFLEVIDVDRNSIRYFPSLAHLTNLKLVIYDHNPCRNAPKVGKGVRRVGRWAEETPEPDPRKARRYALAKEENQEPPPPLLPSSS</sequence>
<reference key="1">
    <citation type="journal article" date="2003" name="Sheng Wu Hua Xue Yu Sheng Wu Wu Li Jin Zhan">
        <title>Molecular cloning, characterization and expression of Lrrc10, a novel mouse heart specific member of leucine rich repeat superfamily.</title>
        <authorList>
            <person name="Chen X.G."/>
            <person name="Li Y."/>
            <person name="Zhao R.-B."/>
            <person name="Pei X.-R."/>
            <person name="Zang M.-X."/>
            <person name="Fang L.-F."/>
            <person name="Chen J."/>
        </authorList>
    </citation>
    <scope>NUCLEOTIDE SEQUENCE [MRNA]</scope>
    <source>
        <strain>BALB/cJ</strain>
        <tissue>Heart</tissue>
    </source>
</reference>
<reference key="2">
    <citation type="journal article" date="2004" name="Biochem. Biophys. Res. Commun.">
        <title>Molecular cloning and expression of HRLRRP, a novel heart-restricted leucine-rich repeat protein.</title>
        <authorList>
            <person name="Nakane T."/>
            <person name="Satoh T."/>
            <person name="Inada Y."/>
            <person name="Nakayama J."/>
            <person name="Itoh F."/>
            <person name="Chiba S."/>
        </authorList>
    </citation>
    <scope>NUCLEOTIDE SEQUENCE [MRNA]</scope>
    <scope>SUBCELLULAR LOCATION</scope>
    <scope>TISSUE SPECIFICITY</scope>
    <source>
        <tissue>Embryo</tissue>
    </source>
</reference>
<reference key="3">
    <citation type="journal article" date="2005" name="Science">
        <title>The transcriptional landscape of the mammalian genome.</title>
        <authorList>
            <person name="Carninci P."/>
            <person name="Kasukawa T."/>
            <person name="Katayama S."/>
            <person name="Gough J."/>
            <person name="Frith M.C."/>
            <person name="Maeda N."/>
            <person name="Oyama R."/>
            <person name="Ravasi T."/>
            <person name="Lenhard B."/>
            <person name="Wells C."/>
            <person name="Kodzius R."/>
            <person name="Shimokawa K."/>
            <person name="Bajic V.B."/>
            <person name="Brenner S.E."/>
            <person name="Batalov S."/>
            <person name="Forrest A.R."/>
            <person name="Zavolan M."/>
            <person name="Davis M.J."/>
            <person name="Wilming L.G."/>
            <person name="Aidinis V."/>
            <person name="Allen J.E."/>
            <person name="Ambesi-Impiombato A."/>
            <person name="Apweiler R."/>
            <person name="Aturaliya R.N."/>
            <person name="Bailey T.L."/>
            <person name="Bansal M."/>
            <person name="Baxter L."/>
            <person name="Beisel K.W."/>
            <person name="Bersano T."/>
            <person name="Bono H."/>
            <person name="Chalk A.M."/>
            <person name="Chiu K.P."/>
            <person name="Choudhary V."/>
            <person name="Christoffels A."/>
            <person name="Clutterbuck D.R."/>
            <person name="Crowe M.L."/>
            <person name="Dalla E."/>
            <person name="Dalrymple B.P."/>
            <person name="de Bono B."/>
            <person name="Della Gatta G."/>
            <person name="di Bernardo D."/>
            <person name="Down T."/>
            <person name="Engstrom P."/>
            <person name="Fagiolini M."/>
            <person name="Faulkner G."/>
            <person name="Fletcher C.F."/>
            <person name="Fukushima T."/>
            <person name="Furuno M."/>
            <person name="Futaki S."/>
            <person name="Gariboldi M."/>
            <person name="Georgii-Hemming P."/>
            <person name="Gingeras T.R."/>
            <person name="Gojobori T."/>
            <person name="Green R.E."/>
            <person name="Gustincich S."/>
            <person name="Harbers M."/>
            <person name="Hayashi Y."/>
            <person name="Hensch T.K."/>
            <person name="Hirokawa N."/>
            <person name="Hill D."/>
            <person name="Huminiecki L."/>
            <person name="Iacono M."/>
            <person name="Ikeo K."/>
            <person name="Iwama A."/>
            <person name="Ishikawa T."/>
            <person name="Jakt M."/>
            <person name="Kanapin A."/>
            <person name="Katoh M."/>
            <person name="Kawasawa Y."/>
            <person name="Kelso J."/>
            <person name="Kitamura H."/>
            <person name="Kitano H."/>
            <person name="Kollias G."/>
            <person name="Krishnan S.P."/>
            <person name="Kruger A."/>
            <person name="Kummerfeld S.K."/>
            <person name="Kurochkin I.V."/>
            <person name="Lareau L.F."/>
            <person name="Lazarevic D."/>
            <person name="Lipovich L."/>
            <person name="Liu J."/>
            <person name="Liuni S."/>
            <person name="McWilliam S."/>
            <person name="Madan Babu M."/>
            <person name="Madera M."/>
            <person name="Marchionni L."/>
            <person name="Matsuda H."/>
            <person name="Matsuzawa S."/>
            <person name="Miki H."/>
            <person name="Mignone F."/>
            <person name="Miyake S."/>
            <person name="Morris K."/>
            <person name="Mottagui-Tabar S."/>
            <person name="Mulder N."/>
            <person name="Nakano N."/>
            <person name="Nakauchi H."/>
            <person name="Ng P."/>
            <person name="Nilsson R."/>
            <person name="Nishiguchi S."/>
            <person name="Nishikawa S."/>
            <person name="Nori F."/>
            <person name="Ohara O."/>
            <person name="Okazaki Y."/>
            <person name="Orlando V."/>
            <person name="Pang K.C."/>
            <person name="Pavan W.J."/>
            <person name="Pavesi G."/>
            <person name="Pesole G."/>
            <person name="Petrovsky N."/>
            <person name="Piazza S."/>
            <person name="Reed J."/>
            <person name="Reid J.F."/>
            <person name="Ring B.Z."/>
            <person name="Ringwald M."/>
            <person name="Rost B."/>
            <person name="Ruan Y."/>
            <person name="Salzberg S.L."/>
            <person name="Sandelin A."/>
            <person name="Schneider C."/>
            <person name="Schoenbach C."/>
            <person name="Sekiguchi K."/>
            <person name="Semple C.A."/>
            <person name="Seno S."/>
            <person name="Sessa L."/>
            <person name="Sheng Y."/>
            <person name="Shibata Y."/>
            <person name="Shimada H."/>
            <person name="Shimada K."/>
            <person name="Silva D."/>
            <person name="Sinclair B."/>
            <person name="Sperling S."/>
            <person name="Stupka E."/>
            <person name="Sugiura K."/>
            <person name="Sultana R."/>
            <person name="Takenaka Y."/>
            <person name="Taki K."/>
            <person name="Tammoja K."/>
            <person name="Tan S.L."/>
            <person name="Tang S."/>
            <person name="Taylor M.S."/>
            <person name="Tegner J."/>
            <person name="Teichmann S.A."/>
            <person name="Ueda H.R."/>
            <person name="van Nimwegen E."/>
            <person name="Verardo R."/>
            <person name="Wei C.L."/>
            <person name="Yagi K."/>
            <person name="Yamanishi H."/>
            <person name="Zabarovsky E."/>
            <person name="Zhu S."/>
            <person name="Zimmer A."/>
            <person name="Hide W."/>
            <person name="Bult C."/>
            <person name="Grimmond S.M."/>
            <person name="Teasdale R.D."/>
            <person name="Liu E.T."/>
            <person name="Brusic V."/>
            <person name="Quackenbush J."/>
            <person name="Wahlestedt C."/>
            <person name="Mattick J.S."/>
            <person name="Hume D.A."/>
            <person name="Kai C."/>
            <person name="Sasaki D."/>
            <person name="Tomaru Y."/>
            <person name="Fukuda S."/>
            <person name="Kanamori-Katayama M."/>
            <person name="Suzuki M."/>
            <person name="Aoki J."/>
            <person name="Arakawa T."/>
            <person name="Iida J."/>
            <person name="Imamura K."/>
            <person name="Itoh M."/>
            <person name="Kato T."/>
            <person name="Kawaji H."/>
            <person name="Kawagashira N."/>
            <person name="Kawashima T."/>
            <person name="Kojima M."/>
            <person name="Kondo S."/>
            <person name="Konno H."/>
            <person name="Nakano K."/>
            <person name="Ninomiya N."/>
            <person name="Nishio T."/>
            <person name="Okada M."/>
            <person name="Plessy C."/>
            <person name="Shibata K."/>
            <person name="Shiraki T."/>
            <person name="Suzuki S."/>
            <person name="Tagami M."/>
            <person name="Waki K."/>
            <person name="Watahiki A."/>
            <person name="Okamura-Oho Y."/>
            <person name="Suzuki H."/>
            <person name="Kawai J."/>
            <person name="Hayashizaki Y."/>
        </authorList>
    </citation>
    <scope>NUCLEOTIDE SEQUENCE [LARGE SCALE MRNA]</scope>
    <source>
        <strain>C57BL/6J</strain>
        <tissue>Heart</tissue>
    </source>
</reference>
<reference key="4">
    <citation type="journal article" date="2004" name="Genome Res.">
        <title>The status, quality, and expansion of the NIH full-length cDNA project: the Mammalian Gene Collection (MGC).</title>
        <authorList>
            <consortium name="The MGC Project Team"/>
        </authorList>
    </citation>
    <scope>NUCLEOTIDE SEQUENCE [LARGE SCALE MRNA]</scope>
    <source>
        <tissue>Heart</tissue>
    </source>
</reference>
<reference key="5">
    <citation type="journal article" date="2010" name="Cell">
        <title>A tissue-specific atlas of mouse protein phosphorylation and expression.</title>
        <authorList>
            <person name="Huttlin E.L."/>
            <person name="Jedrychowski M.P."/>
            <person name="Elias J.E."/>
            <person name="Goswami T."/>
            <person name="Rad R."/>
            <person name="Beausoleil S.A."/>
            <person name="Villen J."/>
            <person name="Haas W."/>
            <person name="Sowa M.E."/>
            <person name="Gygi S.P."/>
        </authorList>
    </citation>
    <scope>IDENTIFICATION BY MASS SPECTROMETRY [LARGE SCALE ANALYSIS]</scope>
    <source>
        <tissue>Heart</tissue>
    </source>
</reference>
<organism>
    <name type="scientific">Mus musculus</name>
    <name type="common">Mouse</name>
    <dbReference type="NCBI Taxonomy" id="10090"/>
    <lineage>
        <taxon>Eukaryota</taxon>
        <taxon>Metazoa</taxon>
        <taxon>Chordata</taxon>
        <taxon>Craniata</taxon>
        <taxon>Vertebrata</taxon>
        <taxon>Euteleostomi</taxon>
        <taxon>Mammalia</taxon>
        <taxon>Eutheria</taxon>
        <taxon>Euarchontoglires</taxon>
        <taxon>Glires</taxon>
        <taxon>Rodentia</taxon>
        <taxon>Myomorpha</taxon>
        <taxon>Muroidea</taxon>
        <taxon>Muridae</taxon>
        <taxon>Murinae</taxon>
        <taxon>Mus</taxon>
        <taxon>Mus</taxon>
    </lineage>
</organism>
<keyword id="KW-0433">Leucine-rich repeat</keyword>
<keyword id="KW-0539">Nucleus</keyword>
<keyword id="KW-1185">Reference proteome</keyword>
<keyword id="KW-0677">Repeat</keyword>
<comment type="function">
    <text>May play important roles in cardiac development and/or cardiac function.</text>
</comment>
<comment type="subcellular location">
    <subcellularLocation>
        <location evidence="2">Nucleus</location>
    </subcellularLocation>
</comment>
<comment type="tissue specificity">
    <text evidence="2">Detected specifically in the heart.</text>
</comment>
<feature type="chain" id="PRO_0000084471" description="Leucine-rich repeat-containing protein 10">
    <location>
        <begin position="1"/>
        <end position="274"/>
    </location>
</feature>
<feature type="repeat" description="LRR 1">
    <location>
        <begin position="30"/>
        <end position="51"/>
    </location>
</feature>
<feature type="repeat" description="LRR 2">
    <location>
        <begin position="52"/>
        <end position="74"/>
    </location>
</feature>
<feature type="repeat" description="LRR 3">
    <location>
        <begin position="76"/>
        <end position="97"/>
    </location>
</feature>
<feature type="repeat" description="LRR 4">
    <location>
        <begin position="98"/>
        <end position="120"/>
    </location>
</feature>
<feature type="repeat" description="LRR 5">
    <location>
        <begin position="121"/>
        <end position="143"/>
    </location>
</feature>
<feature type="repeat" description="LRR 6">
    <location>
        <begin position="145"/>
        <end position="166"/>
    </location>
</feature>
<feature type="repeat" description="LRR 7">
    <location>
        <begin position="167"/>
        <end position="189"/>
    </location>
</feature>
<feature type="repeat" description="LRR 8">
    <location>
        <begin position="191"/>
        <end position="213"/>
    </location>
</feature>
<feature type="region of interest" description="Disordered" evidence="1">
    <location>
        <begin position="236"/>
        <end position="274"/>
    </location>
</feature>
<feature type="compositionally biased region" description="Basic and acidic residues" evidence="1">
    <location>
        <begin position="239"/>
        <end position="250"/>
    </location>
</feature>
<feature type="compositionally biased region" description="Pro residues" evidence="1">
    <location>
        <begin position="264"/>
        <end position="274"/>
    </location>
</feature>
<feature type="sequence conflict" description="In Ref. 3; BAC39192." evidence="3" ref="3">
    <original>R</original>
    <variation>Q</variation>
    <location>
        <position position="26"/>
    </location>
</feature>
<feature type="sequence conflict" description="In Ref. 3; BAC39192." evidence="3" ref="3">
    <original>Q</original>
    <variation>R</variation>
    <location>
        <position position="75"/>
    </location>
</feature>
<protein>
    <recommendedName>
        <fullName>Leucine-rich repeat-containing protein 10</fullName>
    </recommendedName>
    <alternativeName>
        <fullName>Heart-restricted leucine-rich repeat protein</fullName>
    </alternativeName>
</protein>
<accession>Q8K3W2</accession>
<accession>Q8BUL2</accession>
<name>LRC10_MOUSE</name>